<proteinExistence type="inferred from homology"/>
<organism>
    <name type="scientific">Salmonella enteritidis PT4 (strain P125109)</name>
    <dbReference type="NCBI Taxonomy" id="550537"/>
    <lineage>
        <taxon>Bacteria</taxon>
        <taxon>Pseudomonadati</taxon>
        <taxon>Pseudomonadota</taxon>
        <taxon>Gammaproteobacteria</taxon>
        <taxon>Enterobacterales</taxon>
        <taxon>Enterobacteriaceae</taxon>
        <taxon>Salmonella</taxon>
    </lineage>
</organism>
<feature type="chain" id="PRO_1000100681" description="Cytidylate kinase">
    <location>
        <begin position="1"/>
        <end position="227"/>
    </location>
</feature>
<feature type="binding site" evidence="1">
    <location>
        <begin position="12"/>
        <end position="20"/>
    </location>
    <ligand>
        <name>ATP</name>
        <dbReference type="ChEBI" id="CHEBI:30616"/>
    </ligand>
</feature>
<dbReference type="EC" id="2.7.4.25" evidence="1"/>
<dbReference type="EMBL" id="AM933172">
    <property type="protein sequence ID" value="CAR32467.1"/>
    <property type="molecule type" value="Genomic_DNA"/>
</dbReference>
<dbReference type="RefSeq" id="WP_000125007.1">
    <property type="nucleotide sequence ID" value="NC_011294.1"/>
</dbReference>
<dbReference type="SMR" id="B5QZB4"/>
<dbReference type="KEGG" id="set:SEN0884"/>
<dbReference type="HOGENOM" id="CLU_079959_0_2_6"/>
<dbReference type="Proteomes" id="UP000000613">
    <property type="component" value="Chromosome"/>
</dbReference>
<dbReference type="GO" id="GO:0005829">
    <property type="term" value="C:cytosol"/>
    <property type="evidence" value="ECO:0007669"/>
    <property type="project" value="TreeGrafter"/>
</dbReference>
<dbReference type="GO" id="GO:0005524">
    <property type="term" value="F:ATP binding"/>
    <property type="evidence" value="ECO:0007669"/>
    <property type="project" value="UniProtKB-UniRule"/>
</dbReference>
<dbReference type="GO" id="GO:0036430">
    <property type="term" value="F:CMP kinase activity"/>
    <property type="evidence" value="ECO:0007669"/>
    <property type="project" value="RHEA"/>
</dbReference>
<dbReference type="GO" id="GO:0036431">
    <property type="term" value="F:dCMP kinase activity"/>
    <property type="evidence" value="ECO:0007669"/>
    <property type="project" value="RHEA"/>
</dbReference>
<dbReference type="GO" id="GO:0015949">
    <property type="term" value="P:nucleobase-containing small molecule interconversion"/>
    <property type="evidence" value="ECO:0007669"/>
    <property type="project" value="TreeGrafter"/>
</dbReference>
<dbReference type="GO" id="GO:0006220">
    <property type="term" value="P:pyrimidine nucleotide metabolic process"/>
    <property type="evidence" value="ECO:0007669"/>
    <property type="project" value="UniProtKB-UniRule"/>
</dbReference>
<dbReference type="CDD" id="cd02020">
    <property type="entry name" value="CMPK"/>
    <property type="match status" value="1"/>
</dbReference>
<dbReference type="FunFam" id="3.40.50.300:FF:000262">
    <property type="entry name" value="Cytidylate kinase"/>
    <property type="match status" value="1"/>
</dbReference>
<dbReference type="Gene3D" id="3.40.50.300">
    <property type="entry name" value="P-loop containing nucleotide triphosphate hydrolases"/>
    <property type="match status" value="1"/>
</dbReference>
<dbReference type="HAMAP" id="MF_00238">
    <property type="entry name" value="Cytidyl_kinase_type1"/>
    <property type="match status" value="1"/>
</dbReference>
<dbReference type="InterPro" id="IPR003136">
    <property type="entry name" value="Cytidylate_kin"/>
</dbReference>
<dbReference type="InterPro" id="IPR011994">
    <property type="entry name" value="Cytidylate_kinase_dom"/>
</dbReference>
<dbReference type="InterPro" id="IPR027417">
    <property type="entry name" value="P-loop_NTPase"/>
</dbReference>
<dbReference type="NCBIfam" id="TIGR00017">
    <property type="entry name" value="cmk"/>
    <property type="match status" value="1"/>
</dbReference>
<dbReference type="PANTHER" id="PTHR21299:SF2">
    <property type="entry name" value="CYTIDYLATE KINASE"/>
    <property type="match status" value="1"/>
</dbReference>
<dbReference type="PANTHER" id="PTHR21299">
    <property type="entry name" value="CYTIDYLATE KINASE/PANTOATE-BETA-ALANINE LIGASE"/>
    <property type="match status" value="1"/>
</dbReference>
<dbReference type="Pfam" id="PF02224">
    <property type="entry name" value="Cytidylate_kin"/>
    <property type="match status" value="1"/>
</dbReference>
<dbReference type="SUPFAM" id="SSF52540">
    <property type="entry name" value="P-loop containing nucleoside triphosphate hydrolases"/>
    <property type="match status" value="1"/>
</dbReference>
<evidence type="ECO:0000255" key="1">
    <source>
        <dbReference type="HAMAP-Rule" id="MF_00238"/>
    </source>
</evidence>
<gene>
    <name evidence="1" type="primary">cmk</name>
    <name type="ordered locus">SEN0884</name>
</gene>
<comment type="catalytic activity">
    <reaction evidence="1">
        <text>CMP + ATP = CDP + ADP</text>
        <dbReference type="Rhea" id="RHEA:11600"/>
        <dbReference type="ChEBI" id="CHEBI:30616"/>
        <dbReference type="ChEBI" id="CHEBI:58069"/>
        <dbReference type="ChEBI" id="CHEBI:60377"/>
        <dbReference type="ChEBI" id="CHEBI:456216"/>
        <dbReference type="EC" id="2.7.4.25"/>
    </reaction>
</comment>
<comment type="catalytic activity">
    <reaction evidence="1">
        <text>dCMP + ATP = dCDP + ADP</text>
        <dbReference type="Rhea" id="RHEA:25094"/>
        <dbReference type="ChEBI" id="CHEBI:30616"/>
        <dbReference type="ChEBI" id="CHEBI:57566"/>
        <dbReference type="ChEBI" id="CHEBI:58593"/>
        <dbReference type="ChEBI" id="CHEBI:456216"/>
        <dbReference type="EC" id="2.7.4.25"/>
    </reaction>
</comment>
<comment type="subcellular location">
    <subcellularLocation>
        <location evidence="1">Cytoplasm</location>
    </subcellularLocation>
</comment>
<comment type="similarity">
    <text evidence="1">Belongs to the cytidylate kinase family. Type 1 subfamily.</text>
</comment>
<protein>
    <recommendedName>
        <fullName evidence="1">Cytidylate kinase</fullName>
        <shortName evidence="1">CK</shortName>
        <ecNumber evidence="1">2.7.4.25</ecNumber>
    </recommendedName>
    <alternativeName>
        <fullName evidence="1">Cytidine monophosphate kinase</fullName>
        <shortName evidence="1">CMP kinase</shortName>
    </alternativeName>
</protein>
<name>KCY_SALEP</name>
<accession>B5QZB4</accession>
<reference key="1">
    <citation type="journal article" date="2008" name="Genome Res.">
        <title>Comparative genome analysis of Salmonella enteritidis PT4 and Salmonella gallinarum 287/91 provides insights into evolutionary and host adaptation pathways.</title>
        <authorList>
            <person name="Thomson N.R."/>
            <person name="Clayton D.J."/>
            <person name="Windhorst D."/>
            <person name="Vernikos G."/>
            <person name="Davidson S."/>
            <person name="Churcher C."/>
            <person name="Quail M.A."/>
            <person name="Stevens M."/>
            <person name="Jones M.A."/>
            <person name="Watson M."/>
            <person name="Barron A."/>
            <person name="Layton A."/>
            <person name="Pickard D."/>
            <person name="Kingsley R.A."/>
            <person name="Bignell A."/>
            <person name="Clark L."/>
            <person name="Harris B."/>
            <person name="Ormond D."/>
            <person name="Abdellah Z."/>
            <person name="Brooks K."/>
            <person name="Cherevach I."/>
            <person name="Chillingworth T."/>
            <person name="Woodward J."/>
            <person name="Norberczak H."/>
            <person name="Lord A."/>
            <person name="Arrowsmith C."/>
            <person name="Jagels K."/>
            <person name="Moule S."/>
            <person name="Mungall K."/>
            <person name="Saunders M."/>
            <person name="Whitehead S."/>
            <person name="Chabalgoity J.A."/>
            <person name="Maskell D."/>
            <person name="Humphreys T."/>
            <person name="Roberts M."/>
            <person name="Barrow P.A."/>
            <person name="Dougan G."/>
            <person name="Parkhill J."/>
        </authorList>
    </citation>
    <scope>NUCLEOTIDE SEQUENCE [LARGE SCALE GENOMIC DNA]</scope>
    <source>
        <strain>P125109</strain>
    </source>
</reference>
<keyword id="KW-0067">ATP-binding</keyword>
<keyword id="KW-0963">Cytoplasm</keyword>
<keyword id="KW-0418">Kinase</keyword>
<keyword id="KW-0547">Nucleotide-binding</keyword>
<keyword id="KW-0808">Transferase</keyword>
<sequence length="227" mass="24760">MTAIAPVITIDGPSGAGKGTLCKAMAEALQWHLLDSGAIYRVLALAALHHHVDLASEDALVPLASHLDVRFVSTDGNLEVILEGEDVSGEIRTQEVANAASQVAAFPRVREALLRRQRAFREAPGLIADGRDMGTVVFPDAPVKIFLDASSEERAHRRMLQLQENGFSVNFERLLAEIKERDDRDRNRAVAPLVPAADALVLDSTRLSIEQVIEKALQYARQKLALA</sequence>